<geneLocation type="mitochondrion"/>
<organism>
    <name type="scientific">Saccharomyces cerevisiae (strain ATCC 204508 / S288c)</name>
    <name type="common">Baker's yeast</name>
    <dbReference type="NCBI Taxonomy" id="559292"/>
    <lineage>
        <taxon>Eukaryota</taxon>
        <taxon>Fungi</taxon>
        <taxon>Dikarya</taxon>
        <taxon>Ascomycota</taxon>
        <taxon>Saccharomycotina</taxon>
        <taxon>Saccharomycetes</taxon>
        <taxon>Saccharomycetales</taxon>
        <taxon>Saccharomycetaceae</taxon>
        <taxon>Saccharomyces</taxon>
    </lineage>
</organism>
<dbReference type="EMBL" id="X00895">
    <property type="protein sequence ID" value="CAA25423.1"/>
    <property type="molecule type" value="Genomic_DNA"/>
</dbReference>
<dbReference type="EMBL" id="X00960">
    <property type="protein sequence ID" value="CAA25473.1"/>
    <property type="molecule type" value="Genomic_DNA"/>
</dbReference>
<dbReference type="EMBL" id="KP263414">
    <property type="protein sequence ID" value="AIZ98888.1"/>
    <property type="molecule type" value="Genomic_DNA"/>
</dbReference>
<dbReference type="PIR" id="S05820">
    <property type="entry name" value="EWBY8"/>
</dbReference>
<dbReference type="RefSeq" id="NP_009312.1">
    <property type="nucleotide sequence ID" value="NC_001224.1"/>
</dbReference>
<dbReference type="RefSeq" id="YP_009144707.1">
    <property type="nucleotide sequence ID" value="NC_027264.1"/>
</dbReference>
<dbReference type="PDB" id="6B2Z">
    <property type="method" value="EM"/>
    <property type="resolution" value="3.60 A"/>
    <property type="chains" value="A/L=1-48"/>
</dbReference>
<dbReference type="PDB" id="6B8H">
    <property type="method" value="EM"/>
    <property type="resolution" value="3.60 A"/>
    <property type="chains" value="A/V=1-48"/>
</dbReference>
<dbReference type="PDB" id="6CP3">
    <property type="method" value="EM"/>
    <property type="resolution" value="3.80 A"/>
    <property type="chains" value="8=1-48"/>
</dbReference>
<dbReference type="PDB" id="6CP5">
    <property type="method" value="EM"/>
    <property type="resolution" value="4.20 A"/>
    <property type="chains" value="8=1-48"/>
</dbReference>
<dbReference type="PDB" id="6CP6">
    <property type="method" value="EM"/>
    <property type="resolution" value="3.60 A"/>
    <property type="chains" value="8=1-48"/>
</dbReference>
<dbReference type="PDB" id="6CP7">
    <property type="method" value="EM"/>
    <property type="resolution" value="4.10 A"/>
    <property type="chains" value="8=1-48"/>
</dbReference>
<dbReference type="PDB" id="6WTD">
    <property type="method" value="EM"/>
    <property type="resolution" value="4.20 A"/>
    <property type="chains" value="8=1-48"/>
</dbReference>
<dbReference type="PDB" id="7TJY">
    <property type="method" value="EM"/>
    <property type="resolution" value="3.80 A"/>
    <property type="chains" value="Z=1-48"/>
</dbReference>
<dbReference type="PDB" id="7TJZ">
    <property type="method" value="EM"/>
    <property type="resolution" value="4.40 A"/>
    <property type="chains" value="Z=1-48"/>
</dbReference>
<dbReference type="PDB" id="7TK0">
    <property type="method" value="EM"/>
    <property type="resolution" value="4.40 A"/>
    <property type="chains" value="Z=1-48"/>
</dbReference>
<dbReference type="PDB" id="7TK1">
    <property type="method" value="EM"/>
    <property type="resolution" value="7.10 A"/>
    <property type="chains" value="Z=1-48"/>
</dbReference>
<dbReference type="PDB" id="7TK2">
    <property type="method" value="EM"/>
    <property type="resolution" value="6.50 A"/>
    <property type="chains" value="Z=1-48"/>
</dbReference>
<dbReference type="PDB" id="7TK3">
    <property type="method" value="EM"/>
    <property type="resolution" value="6.30 A"/>
    <property type="chains" value="Z=1-48"/>
</dbReference>
<dbReference type="PDB" id="7TK4">
    <property type="method" value="EM"/>
    <property type="resolution" value="7.00 A"/>
    <property type="chains" value="Z=1-48"/>
</dbReference>
<dbReference type="PDB" id="7TK5">
    <property type="method" value="EM"/>
    <property type="resolution" value="7.80 A"/>
    <property type="chains" value="Z=1-48"/>
</dbReference>
<dbReference type="PDB" id="7TK6">
    <property type="method" value="EM"/>
    <property type="resolution" value="6.50 A"/>
    <property type="chains" value="Z=1-48"/>
</dbReference>
<dbReference type="PDB" id="7TK7">
    <property type="method" value="EM"/>
    <property type="resolution" value="6.70 A"/>
    <property type="chains" value="Z=1-48"/>
</dbReference>
<dbReference type="PDB" id="7TK8">
    <property type="method" value="EM"/>
    <property type="resolution" value="4.70 A"/>
    <property type="chains" value="Z=1-48"/>
</dbReference>
<dbReference type="PDB" id="7TK9">
    <property type="method" value="EM"/>
    <property type="resolution" value="6.00 A"/>
    <property type="chains" value="Z=1-48"/>
</dbReference>
<dbReference type="PDB" id="7TKA">
    <property type="method" value="EM"/>
    <property type="resolution" value="7.10 A"/>
    <property type="chains" value="Z=1-48"/>
</dbReference>
<dbReference type="PDB" id="7TKB">
    <property type="method" value="EM"/>
    <property type="resolution" value="6.30 A"/>
    <property type="chains" value="Z=1-48"/>
</dbReference>
<dbReference type="PDB" id="7TKC">
    <property type="method" value="EM"/>
    <property type="resolution" value="5.80 A"/>
    <property type="chains" value="Z=1-48"/>
</dbReference>
<dbReference type="PDB" id="7TKD">
    <property type="method" value="EM"/>
    <property type="resolution" value="7.70 A"/>
    <property type="chains" value="Z=1-48"/>
</dbReference>
<dbReference type="PDB" id="7TKE">
    <property type="method" value="EM"/>
    <property type="resolution" value="7.10 A"/>
    <property type="chains" value="Z=1-48"/>
</dbReference>
<dbReference type="PDB" id="7TKF">
    <property type="method" value="EM"/>
    <property type="resolution" value="7.10 A"/>
    <property type="chains" value="Z=1-48"/>
</dbReference>
<dbReference type="PDB" id="7TKG">
    <property type="method" value="EM"/>
    <property type="resolution" value="4.50 A"/>
    <property type="chains" value="Z=1-48"/>
</dbReference>
<dbReference type="PDB" id="7TKH">
    <property type="method" value="EM"/>
    <property type="resolution" value="4.40 A"/>
    <property type="chains" value="Z=1-48"/>
</dbReference>
<dbReference type="PDB" id="7TKI">
    <property type="method" value="EM"/>
    <property type="resolution" value="7.10 A"/>
    <property type="chains" value="Z=1-48"/>
</dbReference>
<dbReference type="PDB" id="7TKJ">
    <property type="method" value="EM"/>
    <property type="resolution" value="7.50 A"/>
    <property type="chains" value="Z=1-48"/>
</dbReference>
<dbReference type="PDB" id="7TKK">
    <property type="method" value="EM"/>
    <property type="resolution" value="7.30 A"/>
    <property type="chains" value="Z=1-48"/>
</dbReference>
<dbReference type="PDB" id="7TKL">
    <property type="method" value="EM"/>
    <property type="resolution" value="6.40 A"/>
    <property type="chains" value="Z=1-48"/>
</dbReference>
<dbReference type="PDB" id="7TKM">
    <property type="method" value="EM"/>
    <property type="resolution" value="4.50 A"/>
    <property type="chains" value="Z=1-48"/>
</dbReference>
<dbReference type="PDB" id="7TKN">
    <property type="method" value="EM"/>
    <property type="resolution" value="7.10 A"/>
    <property type="chains" value="Z=1-48"/>
</dbReference>
<dbReference type="PDB" id="7TKO">
    <property type="method" value="EM"/>
    <property type="resolution" value="4.80 A"/>
    <property type="chains" value="Z=1-48"/>
</dbReference>
<dbReference type="PDB" id="7TKP">
    <property type="method" value="EM"/>
    <property type="resolution" value="4.60 A"/>
    <property type="chains" value="Z=1-48"/>
</dbReference>
<dbReference type="PDB" id="7TKQ">
    <property type="method" value="EM"/>
    <property type="resolution" value="4.50 A"/>
    <property type="chains" value="Z=1-48"/>
</dbReference>
<dbReference type="PDB" id="7TKR">
    <property type="method" value="EM"/>
    <property type="resolution" value="6.50 A"/>
    <property type="chains" value="Z=1-48"/>
</dbReference>
<dbReference type="PDB" id="7TKS">
    <property type="method" value="EM"/>
    <property type="resolution" value="7.50 A"/>
    <property type="chains" value="Z=1-48"/>
</dbReference>
<dbReference type="PDB" id="8F29">
    <property type="method" value="EM"/>
    <property type="resolution" value="4.00 A"/>
    <property type="chains" value="8=7-47"/>
</dbReference>
<dbReference type="PDB" id="8F39">
    <property type="method" value="EM"/>
    <property type="resolution" value="3.50 A"/>
    <property type="chains" value="8=7-47"/>
</dbReference>
<dbReference type="PDB" id="8FKJ">
    <property type="method" value="EM"/>
    <property type="resolution" value="4.20 A"/>
    <property type="chains" value="8=7-47"/>
</dbReference>
<dbReference type="PDB" id="8FL8">
    <property type="method" value="EM"/>
    <property type="resolution" value="4.20 A"/>
    <property type="chains" value="8=7-47"/>
</dbReference>
<dbReference type="PDBsum" id="6B2Z"/>
<dbReference type="PDBsum" id="6B8H"/>
<dbReference type="PDBsum" id="6CP3"/>
<dbReference type="PDBsum" id="6CP5"/>
<dbReference type="PDBsum" id="6CP6"/>
<dbReference type="PDBsum" id="6CP7"/>
<dbReference type="PDBsum" id="6WTD"/>
<dbReference type="PDBsum" id="7TJY"/>
<dbReference type="PDBsum" id="7TJZ"/>
<dbReference type="PDBsum" id="7TK0"/>
<dbReference type="PDBsum" id="7TK1"/>
<dbReference type="PDBsum" id="7TK2"/>
<dbReference type="PDBsum" id="7TK3"/>
<dbReference type="PDBsum" id="7TK4"/>
<dbReference type="PDBsum" id="7TK5"/>
<dbReference type="PDBsum" id="7TK6"/>
<dbReference type="PDBsum" id="7TK7"/>
<dbReference type="PDBsum" id="7TK8"/>
<dbReference type="PDBsum" id="7TK9"/>
<dbReference type="PDBsum" id="7TKA"/>
<dbReference type="PDBsum" id="7TKB"/>
<dbReference type="PDBsum" id="7TKC"/>
<dbReference type="PDBsum" id="7TKD"/>
<dbReference type="PDBsum" id="7TKE"/>
<dbReference type="PDBsum" id="7TKF"/>
<dbReference type="PDBsum" id="7TKG"/>
<dbReference type="PDBsum" id="7TKH"/>
<dbReference type="PDBsum" id="7TKI"/>
<dbReference type="PDBsum" id="7TKJ"/>
<dbReference type="PDBsum" id="7TKK"/>
<dbReference type="PDBsum" id="7TKL"/>
<dbReference type="PDBsum" id="7TKM"/>
<dbReference type="PDBsum" id="7TKN"/>
<dbReference type="PDBsum" id="7TKO"/>
<dbReference type="PDBsum" id="7TKP"/>
<dbReference type="PDBsum" id="7TKQ"/>
<dbReference type="PDBsum" id="7TKR"/>
<dbReference type="PDBsum" id="7TKS"/>
<dbReference type="PDBsum" id="8F29"/>
<dbReference type="PDBsum" id="8F39"/>
<dbReference type="PDBsum" id="8FKJ"/>
<dbReference type="PDBsum" id="8FL8"/>
<dbReference type="EMDB" id="EMD-21894"/>
<dbReference type="EMDB" id="EMD-25946"/>
<dbReference type="EMDB" id="EMD-25947"/>
<dbReference type="EMDB" id="EMD-25948"/>
<dbReference type="EMDB" id="EMD-25949"/>
<dbReference type="EMDB" id="EMD-25954"/>
<dbReference type="EMDB" id="EMD-25955"/>
<dbReference type="EMDB" id="EMD-25956"/>
<dbReference type="EMDB" id="EMD-25957"/>
<dbReference type="EMDB" id="EMD-25958"/>
<dbReference type="EMDB" id="EMD-25959"/>
<dbReference type="EMDB" id="EMD-25960"/>
<dbReference type="EMDB" id="EMD-25961"/>
<dbReference type="EMDB" id="EMD-25962"/>
<dbReference type="EMDB" id="EMD-25963"/>
<dbReference type="EMDB" id="EMD-25964"/>
<dbReference type="EMDB" id="EMD-25965"/>
<dbReference type="EMDB" id="EMD-25966"/>
<dbReference type="EMDB" id="EMD-25967"/>
<dbReference type="EMDB" id="EMD-25968"/>
<dbReference type="EMDB" id="EMD-25969"/>
<dbReference type="EMDB" id="EMD-25970"/>
<dbReference type="EMDB" id="EMD-25971"/>
<dbReference type="EMDB" id="EMD-25972"/>
<dbReference type="EMDB" id="EMD-25973"/>
<dbReference type="EMDB" id="EMD-25974"/>
<dbReference type="EMDB" id="EMD-25975"/>
<dbReference type="EMDB" id="EMD-25976"/>
<dbReference type="EMDB" id="EMD-25977"/>
<dbReference type="EMDB" id="EMD-25978"/>
<dbReference type="EMDB" id="EMD-25979"/>
<dbReference type="EMDB" id="EMD-25980"/>
<dbReference type="EMDB" id="EMD-28809"/>
<dbReference type="EMDB" id="EMD-28835"/>
<dbReference type="EMDB" id="EMD-7036"/>
<dbReference type="EMDB" id="EMD-7546"/>
<dbReference type="EMDB" id="EMD-7547"/>
<dbReference type="EMDB" id="EMD-7548"/>
<dbReference type="EMDB" id="EMD-7549"/>
<dbReference type="SMR" id="P00856"/>
<dbReference type="BioGRID" id="34792">
    <property type="interactions" value="14"/>
</dbReference>
<dbReference type="ComplexPortal" id="CPX-3281">
    <property type="entry name" value="Mitochondrial proton-transporting ATP synthase complex"/>
</dbReference>
<dbReference type="DIP" id="DIP-3040N"/>
<dbReference type="FunCoup" id="P00856">
    <property type="interactions" value="142"/>
</dbReference>
<dbReference type="IntAct" id="P00856">
    <property type="interactions" value="4"/>
</dbReference>
<dbReference type="STRING" id="4932.Q0080"/>
<dbReference type="TCDB" id="3.A.2.1.3">
    <property type="family name" value="the h+- or na+-translocating f-type, v-type and a-type atpase (f-atpase) superfamily"/>
</dbReference>
<dbReference type="PaxDb" id="4932-Q0080"/>
<dbReference type="EnsemblFungi" id="Q0080_mRNA">
    <property type="protein sequence ID" value="Q0080"/>
    <property type="gene ID" value="Q0080"/>
</dbReference>
<dbReference type="GeneID" id="24573117"/>
<dbReference type="GeneID" id="854600"/>
<dbReference type="KEGG" id="sce:Q0080"/>
<dbReference type="AGR" id="SGD:S000007267"/>
<dbReference type="SGD" id="S000007267">
    <property type="gene designation" value="ATP8"/>
</dbReference>
<dbReference type="VEuPathDB" id="FungiDB:Q0080"/>
<dbReference type="eggNOG" id="ENOG502RM7C">
    <property type="taxonomic scope" value="Eukaryota"/>
</dbReference>
<dbReference type="HOGENOM" id="CLU_214588_0_0_1"/>
<dbReference type="InParanoid" id="P00856"/>
<dbReference type="OrthoDB" id="3916939at2759"/>
<dbReference type="BioCyc" id="YEAST:G3O-34378-MONOMER"/>
<dbReference type="PRO" id="PR:P00856"/>
<dbReference type="Proteomes" id="UP000002311">
    <property type="component" value="Mitochondrion"/>
</dbReference>
<dbReference type="GO" id="GO:0005743">
    <property type="term" value="C:mitochondrial inner membrane"/>
    <property type="evidence" value="ECO:0000314"/>
    <property type="project" value="ComplexPortal"/>
</dbReference>
<dbReference type="GO" id="GO:0005739">
    <property type="term" value="C:mitochondrion"/>
    <property type="evidence" value="ECO:0007005"/>
    <property type="project" value="SGD"/>
</dbReference>
<dbReference type="GO" id="GO:0045259">
    <property type="term" value="C:proton-transporting ATP synthase complex"/>
    <property type="evidence" value="ECO:0000315"/>
    <property type="project" value="SGD"/>
</dbReference>
<dbReference type="GO" id="GO:0015078">
    <property type="term" value="F:proton transmembrane transporter activity"/>
    <property type="evidence" value="ECO:0007669"/>
    <property type="project" value="InterPro"/>
</dbReference>
<dbReference type="GO" id="GO:0015986">
    <property type="term" value="P:proton motive force-driven ATP synthesis"/>
    <property type="evidence" value="ECO:0000314"/>
    <property type="project" value="ComplexPortal"/>
</dbReference>
<dbReference type="InterPro" id="IPR009230">
    <property type="entry name" value="ATP_synth_su8_fun"/>
</dbReference>
<dbReference type="PANTHER" id="PTHR36101">
    <property type="entry name" value="ATP SYNTHASE PROTEIN 8"/>
    <property type="match status" value="1"/>
</dbReference>
<dbReference type="PANTHER" id="PTHR36101:SF1">
    <property type="entry name" value="ATP SYNTHASE PROTEIN 8"/>
    <property type="match status" value="1"/>
</dbReference>
<dbReference type="Pfam" id="PF05933">
    <property type="entry name" value="Fun_ATP-synt_8"/>
    <property type="match status" value="1"/>
</dbReference>
<gene>
    <name type="primary">ATP8</name>
    <name type="synonym">AAP1</name>
    <name type="ordered locus">Q0080</name>
</gene>
<name>ATP8_YEAST</name>
<feature type="chain" id="PRO_0000195607" description="ATP synthase protein 8">
    <location>
        <begin position="1"/>
        <end position="48"/>
    </location>
</feature>
<feature type="transmembrane region" description="Helical" evidence="2">
    <location>
        <begin position="13"/>
        <end position="32"/>
    </location>
</feature>
<proteinExistence type="evidence at protein level"/>
<comment type="function">
    <text evidence="1">Mitochondrial membrane ATP synthase (F(1)F(0) ATP synthase or Complex V) produces ATP from ADP in the presence of a proton gradient across the membrane which is generated by electron transport complexes of the respiratory chain. F-type ATPases consist of two structural domains, F(1) - containing the extramembraneous catalytic core and F(0) - containing the membrane proton channel, linked together by a central stalk and a peripheral stalk. During catalysis, ATP synthesis in the catalytic domain of F(1) is coupled via a rotary mechanism of the central stalk subunits to proton translocation. Part of the complex F(0) domain. Minor subunit located with subunit a in the membrane (By similarity).</text>
</comment>
<comment type="subunit">
    <text>F-type ATPases have 2 components, CF(1) - the catalytic core - and CF(0) - the membrane proton channel. In yeast, the dimeric form of ATP synthase consists of 17 polypeptides: alpha, beta, gamma, delta, epsilon, 4 (B), 5 (OSCP), 6 (A), 8, 9 (C), d, E (Tim11), f, g, h, i/j and k.</text>
</comment>
<comment type="subcellular location">
    <subcellularLocation>
        <location>Mitochondrion membrane</location>
        <topology>Single-pass membrane protein</topology>
    </subcellularLocation>
</comment>
<comment type="similarity">
    <text evidence="3">Belongs to the ATPase protein 8 family.</text>
</comment>
<protein>
    <recommendedName>
        <fullName>ATP synthase protein 8</fullName>
    </recommendedName>
    <alternativeName>
        <fullName>A6L</fullName>
    </alternativeName>
    <alternativeName>
        <fullName>ATP-associated protein 1</fullName>
    </alternativeName>
    <alternativeName>
        <fullName>F-ATPase subunit 8</fullName>
    </alternativeName>
</protein>
<accession>P00856</accession>
<accession>A0A0A7P362</accession>
<reference key="1">
    <citation type="journal article" date="1983" name="Nucleic Acids Res.">
        <title>Biogenesis of mitochondria: the mitochondrial gene (aap1) coding for mitochondrial ATPase subunit 8 in Saccharomyces cerevisiae.</title>
        <authorList>
            <person name="McReadie I.G."/>
            <person name="Novitski C.E."/>
            <person name="Maxwell R.J."/>
            <person name="John U."/>
            <person name="Ooi B.-G."/>
            <person name="McMullen G.L."/>
            <person name="Lukins H.B."/>
            <person name="Linnane A.W."/>
            <person name="Nagley P."/>
        </authorList>
    </citation>
    <scope>NUCLEOTIDE SEQUENCE [GENOMIC DNA]</scope>
</reference>
<reference key="2">
    <citation type="journal article" date="1984" name="Mol. Gen. Genet.">
        <title>Organization and processing of the mitochondrial oxi3/oli2 multigenic transcript in yeast.</title>
        <authorList>
            <person name="Simon M."/>
            <person name="Faye G."/>
        </authorList>
    </citation>
    <scope>NUCLEOTIDE SEQUENCE [GENOMIC DNA]</scope>
</reference>
<reference key="3">
    <citation type="journal article" date="1998" name="FEBS Lett.">
        <title>The complete sequence of the mitochondrial genome of Saccharomyces cerevisiae.</title>
        <authorList>
            <person name="Foury F."/>
            <person name="Roganti T."/>
            <person name="Lecrenier N."/>
            <person name="Purnelle B."/>
        </authorList>
    </citation>
    <scope>NUCLEOTIDE SEQUENCE [LARGE SCALE GENOMIC DNA]</scope>
    <source>
        <strain>ATCC 96604 / S288c / FY1679</strain>
    </source>
</reference>
<reference key="4">
    <citation type="journal article" date="2014" name="G3 (Bethesda)">
        <title>The reference genome sequence of Saccharomyces cerevisiae: Then and now.</title>
        <authorList>
            <person name="Engel S.R."/>
            <person name="Dietrich F.S."/>
            <person name="Fisk D.G."/>
            <person name="Binkley G."/>
            <person name="Balakrishnan R."/>
            <person name="Costanzo M.C."/>
            <person name="Dwight S.S."/>
            <person name="Hitz B.C."/>
            <person name="Karra K."/>
            <person name="Nash R.S."/>
            <person name="Weng S."/>
            <person name="Wong E.D."/>
            <person name="Lloyd P."/>
            <person name="Skrzypek M.S."/>
            <person name="Miyasato S.R."/>
            <person name="Simison M."/>
            <person name="Cherry J.M."/>
        </authorList>
    </citation>
    <scope>GENOME REANNOTATION</scope>
    <source>
        <strain>ATCC 96604 / S288c / FY1679</strain>
    </source>
</reference>
<keyword id="KW-0002">3D-structure</keyword>
<keyword id="KW-0066">ATP synthesis</keyword>
<keyword id="KW-0138">CF(0)</keyword>
<keyword id="KW-0375">Hydrogen ion transport</keyword>
<keyword id="KW-0406">Ion transport</keyword>
<keyword id="KW-0472">Membrane</keyword>
<keyword id="KW-0496">Mitochondrion</keyword>
<keyword id="KW-1185">Reference proteome</keyword>
<keyword id="KW-0812">Transmembrane</keyword>
<keyword id="KW-1133">Transmembrane helix</keyword>
<keyword id="KW-0813">Transport</keyword>
<evidence type="ECO:0000250" key="1"/>
<evidence type="ECO:0000255" key="2"/>
<evidence type="ECO:0000305" key="3"/>
<sequence length="48" mass="5822">MPQLVPFYFMNQLTYGFLLMITLLILFSQFFLPMILRLYVSRLFISKL</sequence>